<sequence length="317" mass="36142">METANYYLPSPPYSSTSSSDSRESRMNTPIPTTYSEENVNSLFHLMPDNTDQWMTSQKNFWQEGSPSSSEYLHQQAVQPSQQARLPGISNFMKDSQLSVKPAAYYCSPTMNDYRVEKVANTLLDPYVQLDQPTYADFTNAQVLNHQQEMLQMNFPTPLSTSYMNTAQVTQTHQMPFNIFELNLSNFATFQPACDTPLPLLNSSPTHPYTTMSNFTPPPQDPLVAEPKPMKKRMAAVQCHQNSICSNCKTRETTLWRRNGEGGVECNACNLYFRKNNRKRPLSLRKDGIMKRNRRPRNESPNSAIRNTHQRHGHAAAC</sequence>
<reference evidence="12" key="1">
    <citation type="journal article" date="1999" name="Dev. Biol.">
        <title>ELT-3: A Caenorhabditis elegans GATA factor expressed in the embryonic epidermis during morphogenesis.</title>
        <authorList>
            <person name="Gilleard J.S."/>
            <person name="Shafi Y."/>
            <person name="Barry J.D."/>
            <person name="McGhee J.D."/>
        </authorList>
    </citation>
    <scope>NUCLEOTIDE SEQUENCE (ISOFORM A)</scope>
    <scope>SUBCELLULAR LOCATION</scope>
    <scope>DEVELOPMENTAL STAGE</scope>
    <source>
        <strain evidence="12">Bristol N2</strain>
        <tissue evidence="12">Epidermis</tissue>
    </source>
</reference>
<reference evidence="13" key="2">
    <citation type="journal article" date="1998" name="Science">
        <title>Genome sequence of the nematode C. elegans: a platform for investigating biology.</title>
        <authorList>
            <consortium name="The C. elegans sequencing consortium"/>
        </authorList>
    </citation>
    <scope>NUCLEOTIDE SEQUENCE [LARGE SCALE GENOMIC DNA]</scope>
    <source>
        <strain evidence="13">Bristol N2</strain>
    </source>
</reference>
<reference evidence="11" key="3">
    <citation type="journal article" date="2001" name="Mol. Cell. Biol.">
        <title>Activation of hypodermal differentiation in the Caenorhabditis elegans embryo by GATA transcription factors ELT-1 and ELT-3.</title>
        <authorList>
            <person name="Gilleard J.S."/>
            <person name="McGhee J.D."/>
        </authorList>
    </citation>
    <scope>FUNCTION</scope>
</reference>
<reference evidence="11" key="4">
    <citation type="journal article" date="2008" name="Cell">
        <title>An elt-3/elt-5/elt-6 GATA transcription circuit guides aging in C. elegans.</title>
        <authorList>
            <person name="Budovskaya Y.V."/>
            <person name="Wu K."/>
            <person name="Southworth L.K."/>
            <person name="Jiang M."/>
            <person name="Tedesco P."/>
            <person name="Johnson T.E."/>
            <person name="Kim S.K."/>
        </authorList>
    </citation>
    <scope>FUNCTION</scope>
    <scope>TISSUE SPECIFICITY</scope>
    <scope>INDUCTION</scope>
    <scope>DISRUPTION PHENOTYPE</scope>
</reference>
<reference key="5">
    <citation type="journal article" date="2010" name="PLoS ONE">
        <title>Genetic and physiological activation of osmosensitive gene expression mimics transcriptional signatures of pathogen infection in C. elegans.</title>
        <authorList>
            <person name="Rohlfing A.K."/>
            <person name="Miteva Y."/>
            <person name="Hannenhalli S."/>
            <person name="Lamitina T."/>
        </authorList>
    </citation>
    <scope>FUNCTION</scope>
</reference>
<reference evidence="11" key="6">
    <citation type="journal article" date="2012" name="Mech. Ageing Dev.">
        <title>Re-evaluating the role of ELT-3 in a GATA transcription factor circuit proposed to guide aging in C. elegans.</title>
        <authorList>
            <person name="Tonsaker T."/>
            <person name="Pratt R.M."/>
            <person name="McGhee J.D."/>
        </authorList>
    </citation>
    <scope>TISSUE SPECIFICITY</scope>
</reference>
<reference evidence="11" key="7">
    <citation type="journal article" date="2013" name="Mech. Ageing Dev.">
        <title>Reconciliation of daf-2 suppression by elt-3 in Caenorhabditis elegans from Tonsaker et al. (2012) and Kim et al. (2012).</title>
        <authorList>
            <person name="Kim S.K."/>
            <person name="Budovskaya Y.V."/>
            <person name="Johnson T.E."/>
        </authorList>
    </citation>
    <scope>FUNCTION</scope>
</reference>
<reference evidence="11" key="8">
    <citation type="journal article" date="2017" name="Genetics">
        <title>The Oxidative Stress Response in Caenorhabditis elegans Requires the GATA Transcription Factor ELT-3 and SKN-1/Nrf2.</title>
        <authorList>
            <person name="Hu Q."/>
            <person name="D'Amora D.R."/>
            <person name="MacNeil L.T."/>
            <person name="Walhout A.J.M."/>
            <person name="Kubiseski T.J."/>
        </authorList>
    </citation>
    <scope>FUNCTION</scope>
    <scope>INTERACTION WITH SKN-1</scope>
    <scope>DISRUPTION PHENOTYPE</scope>
</reference>
<reference key="9">
    <citation type="journal article" date="2020" name="Dev. Cell">
        <title>An ECM-to-Nucleus Signaling Pathway Activates Lysosomes for C. elegans Larval Development.</title>
        <authorList>
            <person name="Miao R."/>
            <person name="Li M."/>
            <person name="Zhang Q."/>
            <person name="Yang C."/>
            <person name="Wang X."/>
        </authorList>
    </citation>
    <scope>FUNCTION</scope>
</reference>
<reference evidence="11" key="10">
    <citation type="journal article" date="2020" name="Genetics">
        <title>Cuticle Collagen Expression Is Regulated in Response to Environmental Stimuli by the GATA Transcription Factor ELT-3 in Caenorhabditis elegans.</title>
        <authorList>
            <person name="Mesbahi H."/>
            <person name="Pho K.B."/>
            <person name="Tench A.J."/>
            <person name="Leon Guerrero V.L."/>
            <person name="MacNeil L.T."/>
        </authorList>
    </citation>
    <scope>FUNCTION</scope>
</reference>
<protein>
    <recommendedName>
        <fullName evidence="10">Transcription factor elt-3</fullName>
    </recommendedName>
</protein>
<accession>B7WN96</accession>
<accession>E5QCG7</accession>
<accession>E5QCG8</accession>
<accession>G5ECF7</accession>
<keyword id="KW-0025">Alternative splicing</keyword>
<keyword id="KW-0479">Metal-binding</keyword>
<keyword id="KW-0539">Nucleus</keyword>
<keyword id="KW-1185">Reference proteome</keyword>
<keyword id="KW-0804">Transcription</keyword>
<keyword id="KW-0805">Transcription regulation</keyword>
<keyword id="KW-0862">Zinc</keyword>
<keyword id="KW-0863">Zinc-finger</keyword>
<gene>
    <name evidence="15" type="primary">elt-3</name>
    <name evidence="15" type="ORF">K02B9.4</name>
</gene>
<evidence type="ECO:0000255" key="1">
    <source>
        <dbReference type="PROSITE-ProRule" id="PRU00094"/>
    </source>
</evidence>
<evidence type="ECO:0000256" key="2">
    <source>
        <dbReference type="SAM" id="MobiDB-lite"/>
    </source>
</evidence>
<evidence type="ECO:0000269" key="3">
    <source>
    </source>
</evidence>
<evidence type="ECO:0000269" key="4">
    <source>
    </source>
</evidence>
<evidence type="ECO:0000269" key="5">
    <source>
    </source>
</evidence>
<evidence type="ECO:0000269" key="6">
    <source>
    </source>
</evidence>
<evidence type="ECO:0000269" key="7">
    <source>
    </source>
</evidence>
<evidence type="ECO:0000269" key="8">
    <source>
    </source>
</evidence>
<evidence type="ECO:0000269" key="9">
    <source>
    </source>
</evidence>
<evidence type="ECO:0000303" key="10">
    <source>
    </source>
</evidence>
<evidence type="ECO:0000305" key="11"/>
<evidence type="ECO:0000312" key="12">
    <source>
        <dbReference type="EMBL" id="AAD33964.1"/>
    </source>
</evidence>
<evidence type="ECO:0000312" key="13">
    <source>
        <dbReference type="Proteomes" id="UP000001940"/>
    </source>
</evidence>
<evidence type="ECO:0000312" key="14">
    <source>
        <dbReference type="WormBase" id="K02B9.4a"/>
    </source>
</evidence>
<evidence type="ECO:0000312" key="15">
    <source>
        <dbReference type="WormBase" id="K02B9.4b"/>
    </source>
</evidence>
<evidence type="ECO:0000312" key="16">
    <source>
        <dbReference type="WormBase" id="K02B9.4c"/>
    </source>
</evidence>
<evidence type="ECO:0000312" key="17">
    <source>
        <dbReference type="WormBase" id="K02B9.4d"/>
    </source>
</evidence>
<proteinExistence type="evidence at protein level"/>
<dbReference type="EMBL" id="AF146517">
    <property type="protein sequence ID" value="AAD33964.1"/>
    <property type="molecule type" value="mRNA"/>
</dbReference>
<dbReference type="EMBL" id="BX284606">
    <property type="protein sequence ID" value="CAA93510.2"/>
    <property type="molecule type" value="Genomic_DNA"/>
</dbReference>
<dbReference type="EMBL" id="BX284606">
    <property type="protein sequence ID" value="CAV31779.1"/>
    <property type="molecule type" value="Genomic_DNA"/>
</dbReference>
<dbReference type="EMBL" id="BX284606">
    <property type="protein sequence ID" value="CBY25184.1"/>
    <property type="molecule type" value="Genomic_DNA"/>
</dbReference>
<dbReference type="EMBL" id="BX284606">
    <property type="protein sequence ID" value="CBY25185.1"/>
    <property type="molecule type" value="Genomic_DNA"/>
</dbReference>
<dbReference type="PIR" id="C89697">
    <property type="entry name" value="C89697"/>
</dbReference>
<dbReference type="PIR" id="T23233">
    <property type="entry name" value="T23233"/>
</dbReference>
<dbReference type="RefSeq" id="NP_001257234.1">
    <property type="nucleotide sequence ID" value="NM_001270305.1"/>
</dbReference>
<dbReference type="RefSeq" id="NP_001257235.1">
    <property type="nucleotide sequence ID" value="NM_001270306.1"/>
</dbReference>
<dbReference type="RefSeq" id="NP_001257236.1">
    <molecule id="B7WN96-3"/>
    <property type="nucleotide sequence ID" value="NM_001270307.4"/>
</dbReference>
<dbReference type="RefSeq" id="NP_001257237.1">
    <molecule id="B7WN96-4"/>
    <property type="nucleotide sequence ID" value="NM_001270308.4"/>
</dbReference>
<dbReference type="RefSeq" id="NP_001367208.1">
    <molecule id="B7WN96-1"/>
    <property type="nucleotide sequence ID" value="NM_001381138.1"/>
</dbReference>
<dbReference type="RefSeq" id="NP_001379114.1">
    <molecule id="B7WN96-2"/>
    <property type="nucleotide sequence ID" value="NM_001392881.1"/>
</dbReference>
<dbReference type="FunCoup" id="B7WN96">
    <property type="interactions" value="133"/>
</dbReference>
<dbReference type="IntAct" id="B7WN96">
    <property type="interactions" value="3"/>
</dbReference>
<dbReference type="STRING" id="6239.K02B9.4b.1"/>
<dbReference type="PaxDb" id="6239-K02B9.4b"/>
<dbReference type="EnsemblMetazoa" id="K02B9.4a.1">
    <molecule id="B7WN96-2"/>
    <property type="protein sequence ID" value="K02B9.4a.1"/>
    <property type="gene ID" value="WBGene00001251"/>
</dbReference>
<dbReference type="EnsemblMetazoa" id="K02B9.4a.2">
    <molecule id="B7WN96-2"/>
    <property type="protein sequence ID" value="K02B9.4a.2"/>
    <property type="gene ID" value="WBGene00001251"/>
</dbReference>
<dbReference type="EnsemblMetazoa" id="K02B9.4a.3">
    <molecule id="B7WN96-2"/>
    <property type="protein sequence ID" value="K02B9.4a.3"/>
    <property type="gene ID" value="WBGene00001251"/>
</dbReference>
<dbReference type="EnsemblMetazoa" id="K02B9.4b.1">
    <molecule id="B7WN96-1"/>
    <property type="protein sequence ID" value="K02B9.4b.1"/>
    <property type="gene ID" value="WBGene00001251"/>
</dbReference>
<dbReference type="EnsemblMetazoa" id="K02B9.4c.1">
    <molecule id="B7WN96-3"/>
    <property type="protein sequence ID" value="K02B9.4c.1"/>
    <property type="gene ID" value="WBGene00001251"/>
</dbReference>
<dbReference type="EnsemblMetazoa" id="K02B9.4d.1">
    <molecule id="B7WN96-4"/>
    <property type="protein sequence ID" value="K02B9.4d.1"/>
    <property type="gene ID" value="WBGene00001251"/>
</dbReference>
<dbReference type="GeneID" id="181503"/>
<dbReference type="KEGG" id="cel:CELE_K02B9.4"/>
<dbReference type="AGR" id="WB:WBGene00001251"/>
<dbReference type="CTD" id="181503"/>
<dbReference type="WormBase" id="K02B9.4a">
    <molecule id="B7WN96-2"/>
    <property type="protein sequence ID" value="CE23844"/>
    <property type="gene ID" value="WBGene00001251"/>
    <property type="gene designation" value="elt-3"/>
</dbReference>
<dbReference type="WormBase" id="K02B9.4b">
    <molecule id="B7WN96-1"/>
    <property type="protein sequence ID" value="CE43426"/>
    <property type="gene ID" value="WBGene00001251"/>
    <property type="gene designation" value="elt-3"/>
</dbReference>
<dbReference type="WormBase" id="K02B9.4c">
    <molecule id="B7WN96-3"/>
    <property type="protein sequence ID" value="CE06061"/>
    <property type="gene ID" value="WBGene00001251"/>
    <property type="gene designation" value="elt-3"/>
</dbReference>
<dbReference type="WormBase" id="K02B9.4d">
    <molecule id="B7WN96-4"/>
    <property type="protein sequence ID" value="CE45597"/>
    <property type="gene ID" value="WBGene00001251"/>
    <property type="gene designation" value="elt-3"/>
</dbReference>
<dbReference type="eggNOG" id="KOG1601">
    <property type="taxonomic scope" value="Eukaryota"/>
</dbReference>
<dbReference type="HOGENOM" id="CLU_075147_0_0_1"/>
<dbReference type="InParanoid" id="B7WN96"/>
<dbReference type="OMA" id="PGISNFM"/>
<dbReference type="OrthoDB" id="515401at2759"/>
<dbReference type="PRO" id="PR:B7WN96"/>
<dbReference type="Proteomes" id="UP000001940">
    <property type="component" value="Chromosome X"/>
</dbReference>
<dbReference type="Bgee" id="WBGene00001251">
    <property type="expression patterns" value="Expressed in larva and 3 other cell types or tissues"/>
</dbReference>
<dbReference type="ExpressionAtlas" id="B7WN96">
    <property type="expression patterns" value="baseline and differential"/>
</dbReference>
<dbReference type="GO" id="GO:0005634">
    <property type="term" value="C:nucleus"/>
    <property type="evidence" value="ECO:0000314"/>
    <property type="project" value="UniProtKB"/>
</dbReference>
<dbReference type="GO" id="GO:0000981">
    <property type="term" value="F:DNA-binding transcription factor activity, RNA polymerase II-specific"/>
    <property type="evidence" value="ECO:0000318"/>
    <property type="project" value="GO_Central"/>
</dbReference>
<dbReference type="GO" id="GO:0000978">
    <property type="term" value="F:RNA polymerase II cis-regulatory region sequence-specific DNA binding"/>
    <property type="evidence" value="ECO:0000318"/>
    <property type="project" value="GO_Central"/>
</dbReference>
<dbReference type="GO" id="GO:0000977">
    <property type="term" value="F:RNA polymerase II transcription regulatory region sequence-specific DNA binding"/>
    <property type="evidence" value="ECO:0000314"/>
    <property type="project" value="WormBase"/>
</dbReference>
<dbReference type="GO" id="GO:0061629">
    <property type="term" value="F:RNA polymerase II-specific DNA-binding transcription factor binding"/>
    <property type="evidence" value="ECO:0000353"/>
    <property type="project" value="UniProtKB"/>
</dbReference>
<dbReference type="GO" id="GO:0008270">
    <property type="term" value="F:zinc ion binding"/>
    <property type="evidence" value="ECO:0007669"/>
    <property type="project" value="UniProtKB-KW"/>
</dbReference>
<dbReference type="GO" id="GO:0045165">
    <property type="term" value="P:cell fate commitment"/>
    <property type="evidence" value="ECO:0000318"/>
    <property type="project" value="GO_Central"/>
</dbReference>
<dbReference type="GO" id="GO:0008340">
    <property type="term" value="P:determination of adult lifespan"/>
    <property type="evidence" value="ECO:0000315"/>
    <property type="project" value="WormBase"/>
</dbReference>
<dbReference type="GO" id="GO:0007040">
    <property type="term" value="P:lysosome organization"/>
    <property type="evidence" value="ECO:0000316"/>
    <property type="project" value="UniProtKB"/>
</dbReference>
<dbReference type="GO" id="GO:0000122">
    <property type="term" value="P:negative regulation of transcription by RNA polymerase II"/>
    <property type="evidence" value="ECO:0000318"/>
    <property type="project" value="GO_Central"/>
</dbReference>
<dbReference type="GO" id="GO:0045944">
    <property type="term" value="P:positive regulation of transcription by RNA polymerase II"/>
    <property type="evidence" value="ECO:0000315"/>
    <property type="project" value="UniProtKB"/>
</dbReference>
<dbReference type="GO" id="GO:0006357">
    <property type="term" value="P:regulation of transcription by RNA polymerase II"/>
    <property type="evidence" value="ECO:0000315"/>
    <property type="project" value="UniProtKB"/>
</dbReference>
<dbReference type="GO" id="GO:0006970">
    <property type="term" value="P:response to osmotic stress"/>
    <property type="evidence" value="ECO:0000316"/>
    <property type="project" value="UniProtKB"/>
</dbReference>
<dbReference type="GO" id="GO:0006979">
    <property type="term" value="P:response to oxidative stress"/>
    <property type="evidence" value="ECO:0000315"/>
    <property type="project" value="UniProtKB"/>
</dbReference>
<dbReference type="CDD" id="cd00202">
    <property type="entry name" value="ZnF_GATA"/>
    <property type="match status" value="1"/>
</dbReference>
<dbReference type="FunFam" id="3.30.50.10:FF:000045">
    <property type="entry name" value="Transcription factor elt-7"/>
    <property type="match status" value="1"/>
</dbReference>
<dbReference type="Gene3D" id="3.30.50.10">
    <property type="entry name" value="Erythroid Transcription Factor GATA-1, subunit A"/>
    <property type="match status" value="1"/>
</dbReference>
<dbReference type="InterPro" id="IPR039355">
    <property type="entry name" value="Transcription_factor_GATA"/>
</dbReference>
<dbReference type="InterPro" id="IPR000679">
    <property type="entry name" value="Znf_GATA"/>
</dbReference>
<dbReference type="InterPro" id="IPR013088">
    <property type="entry name" value="Znf_NHR/GATA"/>
</dbReference>
<dbReference type="PANTHER" id="PTHR10071:SF322">
    <property type="entry name" value="TRANSCRIPTION FACTOR ELT-3"/>
    <property type="match status" value="1"/>
</dbReference>
<dbReference type="PANTHER" id="PTHR10071">
    <property type="entry name" value="TRANSCRIPTION FACTOR GATA FAMILY MEMBER"/>
    <property type="match status" value="1"/>
</dbReference>
<dbReference type="Pfam" id="PF00320">
    <property type="entry name" value="GATA"/>
    <property type="match status" value="1"/>
</dbReference>
<dbReference type="PRINTS" id="PR00619">
    <property type="entry name" value="GATAZNFINGER"/>
</dbReference>
<dbReference type="SMART" id="SM00401">
    <property type="entry name" value="ZnF_GATA"/>
    <property type="match status" value="1"/>
</dbReference>
<dbReference type="SUPFAM" id="SSF57716">
    <property type="entry name" value="Glucocorticoid receptor-like (DNA-binding domain)"/>
    <property type="match status" value="1"/>
</dbReference>
<dbReference type="PROSITE" id="PS00344">
    <property type="entry name" value="GATA_ZN_FINGER_1"/>
    <property type="match status" value="1"/>
</dbReference>
<dbReference type="PROSITE" id="PS50114">
    <property type="entry name" value="GATA_ZN_FINGER_2"/>
    <property type="match status" value="1"/>
</dbReference>
<comment type="function">
    <text evidence="4 5 7 8 9">Transcription factor (PubMed:18662544, PubMed:28600327). Required, in concert with signal transducer and transcription factor sta-2, for up-regulation of the vacuolar H(+)-ATPase and acceleration of lysosome maturation at molt (PubMed:31735670). Involved in regulating hypodermal development, perhaps acting downstream of transcription factor elt-1 (PubMed:11259601). Modulates environmentally induced changes in collagen gene expression, including rol-6, sqt-1, lon-3, and dpy-13 (PubMed:32229533). Involved in regulating expression of various genes, including gst-4, sod-3, ugt-9, and col-144 (PubMed:18662544, PubMed:28600327). In response to oxidative stress, required to up-regulate expression of gst-4 mRNA (PubMed:28600327). Regulated by the Insulin/IGF-1-like signaling (IIS) mediated pathway (PubMed:18662544). Plays a role in longevity (PubMed:18662544, PubMed:23262285). May regulate the expression of genes that control sensitivity to osmotic stress, in conjunction with the GATA region-binding transcription factor elt-2 (PubMed:20126308). May form a transcriptional circuit with GATA factors egl-18 and elt-6 (PubMed:18662544).</text>
</comment>
<comment type="subunit">
    <text evidence="8">Interacts with skn-1; interaction may enhance transcriptional activation of target genes.</text>
</comment>
<comment type="subcellular location">
    <subcellularLocation>
        <location evidence="3">Nucleus</location>
    </subcellularLocation>
</comment>
<comment type="alternative products">
    <event type="alternative splicing"/>
    <isoform>
        <id>B7WN96-1</id>
        <name evidence="15">b</name>
        <sequence type="displayed"/>
    </isoform>
    <isoform>
        <id>B7WN96-2</id>
        <name evidence="14">a</name>
        <sequence type="described" ref="VSP_061879"/>
    </isoform>
    <isoform>
        <id>B7WN96-3</id>
        <name evidence="16">c</name>
        <sequence type="described" ref="VSP_061878"/>
    </isoform>
    <isoform>
        <id>B7WN96-4</id>
        <name evidence="17">d</name>
        <sequence type="described" ref="VSP_061877"/>
    </isoform>
</comment>
<comment type="tissue specificity">
    <text evidence="5 6">Expressed in head, trunk and tail (PubMed:18662544). Expression decreases with age in the hypodermal cells and the pharyngeal-intestinal valve cells in the head, eventually showing little or no expression in about 14 day old worms (PubMed:18662544). Expressed in hypodermal, but not in intestinal, cells at 1 day of age (PubMed:22001047). Expression in the hypodermal and intestinal cells in the trunk region decreases quickly between day 3 and day 5 of adulthood (PubMed:18662544). Expression in the tail between days 3 and 14 stays approximately uniform (PubMed:18662544).</text>
</comment>
<comment type="developmental stage">
    <text evidence="3">Expressed in embryonic and in larval L1, L2, L3 and L4 stages, and in immature adults (PubMed:10191044). Earliest expression detected in eight cells on the posterior dorsal surface of the embryo, probably granddaughters of Cpaa and Caaa, approximately 240 minutes after the first cell cleavage (at protein level) (PubMed:10191044). At approximately 260 minutes after the first cleavage, expressed in cells on the dorsal, and ventrolateral, surfaces of the embryo; these are probably hypodermal and ventral hypodermal cells (P cells), respectively (PubMed:10191044). Expressed in comma stage embryos, at about 350 minutes, in all the dorsal (hyp-7) and ventral (P1/2-P11/12) hypodermal cells in the main body region; also in hypodermal cells of the head (hyp-4, hyp-5, and hyp-6) and tail (hyp-8, hyp-9, hyp-10, and hyp-11) (PubMed:10191044). No expression is seen in the lateral hypodermal cells (seam cells; V1-V6, H0, H1, H2, and T) or the minor hypodermal cells of the head (hyp-1, hyp-2, and hyp-3) (PubMed:10191044). Expressed from the 3-fold stage of embryogenesis onward in two cells, probably the vpi3 cells of the pharyngeal-intestinal valve, immediately anterior to the gut (at protein level) (PubMed:10191044). Also expressed in five cells immediately posterior to the gut, probably the intestinal-rectal valve cells (virL and virR) and the rectal epithelial cells (rect D, rect VL, and rect VR) (at protein level) (PubMed:10191044).</text>
</comment>
<comment type="induction">
    <text evidence="5">Repressed during adulthood by normal aging.</text>
</comment>
<comment type="disruption phenotype">
    <text evidence="5 8">RNAi-mediated knockdown reduces expression of ugt-9 about 74% at 3 days and 95% at 7 days after adulthood (PubMed:18662544). Suppresses the longevity of long-lived mutants daf-2 or eat-2 (PubMed:18662544). Suppresses transcription of the gst-4 gene in a brap-2 mutant background (PubMed:28600327).</text>
</comment>
<comment type="caution">
    <text evidence="5 6 7">Expressed in the intestine (PubMed:18662544). However, others have been unable to detect intestinal expression (PubMed:22001047). Based on lifespan assays conducted with a putative null allele, elt-3(vp1), represses longevity caused by a daf-2(e1370) mutant background (PubMed:18662544). However, this repression could not be reproduced (PubMed:22001047). Based on further analysis, the failure to reproduce seems to be due to a novel, unknown, mutation which arose in the daf-2(e1370) mutant background in one lab, but not the other (PubMed:23262285).</text>
</comment>
<name>ELT3_CAEEL</name>
<feature type="chain" id="PRO_0000458014" description="Transcription factor elt-3">
    <location>
        <begin position="1"/>
        <end position="317"/>
    </location>
</feature>
<feature type="zinc finger region" description="GATA-type" evidence="1">
    <location>
        <begin position="244"/>
        <end position="268"/>
    </location>
</feature>
<feature type="region of interest" description="Disordered" evidence="2">
    <location>
        <begin position="1"/>
        <end position="34"/>
    </location>
</feature>
<feature type="region of interest" description="Disordered" evidence="2">
    <location>
        <begin position="290"/>
        <end position="317"/>
    </location>
</feature>
<feature type="compositionally biased region" description="Basic residues" evidence="2">
    <location>
        <begin position="307"/>
        <end position="317"/>
    </location>
</feature>
<feature type="splice variant" id="VSP_061877" description="In isoform d.">
    <location>
        <begin position="1"/>
        <end position="148"/>
    </location>
</feature>
<feature type="splice variant" id="VSP_061878" description="In isoform c.">
    <location>
        <begin position="1"/>
        <end position="109"/>
    </location>
</feature>
<feature type="splice variant" id="VSP_061879" description="In isoform a.">
    <location>
        <begin position="1"/>
        <end position="91"/>
    </location>
</feature>
<organism evidence="13">
    <name type="scientific">Caenorhabditis elegans</name>
    <dbReference type="NCBI Taxonomy" id="6239"/>
    <lineage>
        <taxon>Eukaryota</taxon>
        <taxon>Metazoa</taxon>
        <taxon>Ecdysozoa</taxon>
        <taxon>Nematoda</taxon>
        <taxon>Chromadorea</taxon>
        <taxon>Rhabditida</taxon>
        <taxon>Rhabditina</taxon>
        <taxon>Rhabditomorpha</taxon>
        <taxon>Rhabditoidea</taxon>
        <taxon>Rhabditidae</taxon>
        <taxon>Peloderinae</taxon>
        <taxon>Caenorhabditis</taxon>
    </lineage>
</organism>